<proteinExistence type="inferred from homology"/>
<sequence length="141" mass="15789">METIGFHYVVEAAGCDPEILGNADKIRQIFLEAAKVGKMEVKASYFFKFSPTGVSGVVIVAESHISIHTWPEKGYAALDVYTCGTTADPEKAVDYILDKIKAQYAHVSEIKRGIEEDDETFTHMILTWEEKLERKNGDEKS</sequence>
<name>SPEH_THEON</name>
<evidence type="ECO:0000255" key="1">
    <source>
        <dbReference type="HAMAP-Rule" id="MF_00464"/>
    </source>
</evidence>
<feature type="chain" id="PRO_1000125467" description="S-adenosylmethionine decarboxylase beta chain" evidence="1">
    <location>
        <begin position="1"/>
        <end position="62"/>
    </location>
</feature>
<feature type="chain" id="PRO_1000125468" description="S-adenosylmethionine decarboxylase alpha chain" evidence="1">
    <location>
        <begin position="63"/>
        <end position="141"/>
    </location>
</feature>
<feature type="active site" description="Schiff-base intermediate with substrate; via pyruvic acid" evidence="1">
    <location>
        <position position="63"/>
    </location>
</feature>
<feature type="active site" description="Proton acceptor; for processing activity" evidence="1">
    <location>
        <position position="68"/>
    </location>
</feature>
<feature type="active site" description="Proton donor; for catalytic activity" evidence="1">
    <location>
        <position position="83"/>
    </location>
</feature>
<feature type="site" description="Cleavage (non-hydrolytic); by autolysis" evidence="1">
    <location>
        <begin position="62"/>
        <end position="63"/>
    </location>
</feature>
<feature type="modified residue" description="Pyruvic acid (Ser); by autocatalysis" evidence="1">
    <location>
        <position position="63"/>
    </location>
</feature>
<organism>
    <name type="scientific">Thermococcus onnurineus (strain NA1)</name>
    <dbReference type="NCBI Taxonomy" id="523850"/>
    <lineage>
        <taxon>Archaea</taxon>
        <taxon>Methanobacteriati</taxon>
        <taxon>Methanobacteriota</taxon>
        <taxon>Thermococci</taxon>
        <taxon>Thermococcales</taxon>
        <taxon>Thermococcaceae</taxon>
        <taxon>Thermococcus</taxon>
    </lineage>
</organism>
<keyword id="KW-0068">Autocatalytic cleavage</keyword>
<keyword id="KW-0210">Decarboxylase</keyword>
<keyword id="KW-0456">Lyase</keyword>
<keyword id="KW-0620">Polyamine biosynthesis</keyword>
<keyword id="KW-0670">Pyruvate</keyword>
<keyword id="KW-0949">S-adenosyl-L-methionine</keyword>
<keyword id="KW-0704">Schiff base</keyword>
<keyword id="KW-0745">Spermidine biosynthesis</keyword>
<keyword id="KW-0865">Zymogen</keyword>
<accession>B6YV04</accession>
<comment type="function">
    <text evidence="1">Catalyzes the decarboxylation of S-adenosylmethionine to S-adenosylmethioninamine (dcAdoMet), the propylamine donor required for the synthesis of the polyamines spermine and spermidine from the diamine putrescine.</text>
</comment>
<comment type="catalytic activity">
    <reaction evidence="1">
        <text>S-adenosyl-L-methionine + H(+) = S-adenosyl 3-(methylsulfanyl)propylamine + CO2</text>
        <dbReference type="Rhea" id="RHEA:15981"/>
        <dbReference type="ChEBI" id="CHEBI:15378"/>
        <dbReference type="ChEBI" id="CHEBI:16526"/>
        <dbReference type="ChEBI" id="CHEBI:57443"/>
        <dbReference type="ChEBI" id="CHEBI:59789"/>
        <dbReference type="EC" id="4.1.1.50"/>
    </reaction>
</comment>
<comment type="cofactor">
    <cofactor evidence="1">
        <name>pyruvate</name>
        <dbReference type="ChEBI" id="CHEBI:15361"/>
    </cofactor>
    <text evidence="1">Binds 1 pyruvoyl group covalently per subunit.</text>
</comment>
<comment type="pathway">
    <text evidence="1">Amine and polyamine biosynthesis; S-adenosylmethioninamine biosynthesis; S-adenosylmethioninamine from S-adenosyl-L-methionine: step 1/1.</text>
</comment>
<comment type="subunit">
    <text evidence="1">Heterotetramer of two alpha and two beta chains arranged as a dimer of alpha/beta heterodimers.</text>
</comment>
<comment type="PTM">
    <text evidence="1">Is synthesized initially as an inactive proenzyme. Formation of the active enzyme involves a self-maturation process in which the active site pyruvoyl group is generated from an internal serine residue via an autocatalytic post-translational modification. Two non-identical subunits are generated from the proenzyme in this reaction, and the pyruvate is formed at the N-terminus of the alpha chain, which is derived from the carboxyl end of the proenzyme. The post-translation cleavage follows an unusual pathway, termed non-hydrolytic serinolysis, in which the side chain hydroxyl group of the serine supplies its oxygen atom to form the C-terminus of the beta chain, while the remainder of the serine residue undergoes an oxidative deamination to produce ammonia and the pyruvoyl group blocking the N-terminus of the alpha chain.</text>
</comment>
<comment type="similarity">
    <text evidence="1">Belongs to the prokaryotic AdoMetDC family. Type 1 subfamily.</text>
</comment>
<gene>
    <name evidence="1" type="primary">speH</name>
    <name type="ordered locus">TON_1742</name>
</gene>
<protein>
    <recommendedName>
        <fullName evidence="1">S-adenosylmethionine decarboxylase proenzyme</fullName>
        <shortName evidence="1">AdoMetDC</shortName>
        <shortName evidence="1">SAMDC</shortName>
        <ecNumber evidence="1">4.1.1.50</ecNumber>
    </recommendedName>
    <component>
        <recommendedName>
            <fullName evidence="1">S-adenosylmethionine decarboxylase beta chain</fullName>
        </recommendedName>
    </component>
    <component>
        <recommendedName>
            <fullName evidence="1">S-adenosylmethionine decarboxylase alpha chain</fullName>
        </recommendedName>
    </component>
</protein>
<reference key="1">
    <citation type="journal article" date="2008" name="J. Bacteriol.">
        <title>The complete genome sequence of Thermococcus onnurineus NA1 reveals a mixed heterotrophic and carboxydotrophic metabolism.</title>
        <authorList>
            <person name="Lee H.S."/>
            <person name="Kang S.G."/>
            <person name="Bae S.S."/>
            <person name="Lim J.K."/>
            <person name="Cho Y."/>
            <person name="Kim Y.J."/>
            <person name="Jeon J.H."/>
            <person name="Cha S.-S."/>
            <person name="Kwon K.K."/>
            <person name="Kim H.-T."/>
            <person name="Park C.-J."/>
            <person name="Lee H.-W."/>
            <person name="Kim S.I."/>
            <person name="Chun J."/>
            <person name="Colwell R.R."/>
            <person name="Kim S.-J."/>
            <person name="Lee J.-H."/>
        </authorList>
    </citation>
    <scope>NUCLEOTIDE SEQUENCE [LARGE SCALE GENOMIC DNA]</scope>
    <source>
        <strain>NA1</strain>
    </source>
</reference>
<dbReference type="EC" id="4.1.1.50" evidence="1"/>
<dbReference type="EMBL" id="CP000855">
    <property type="protein sequence ID" value="ACJ17232.1"/>
    <property type="molecule type" value="Genomic_DNA"/>
</dbReference>
<dbReference type="RefSeq" id="WP_012572704.1">
    <property type="nucleotide sequence ID" value="NC_011529.1"/>
</dbReference>
<dbReference type="SMR" id="B6YV04"/>
<dbReference type="STRING" id="523850.TON_1742"/>
<dbReference type="GeneID" id="7017411"/>
<dbReference type="KEGG" id="ton:TON_1742"/>
<dbReference type="PATRIC" id="fig|523850.10.peg.1755"/>
<dbReference type="eggNOG" id="arCOG00279">
    <property type="taxonomic scope" value="Archaea"/>
</dbReference>
<dbReference type="HOGENOM" id="CLU_125470_2_3_2"/>
<dbReference type="OrthoDB" id="114016at2157"/>
<dbReference type="UniPathway" id="UPA00331">
    <property type="reaction ID" value="UER00451"/>
</dbReference>
<dbReference type="Proteomes" id="UP000002727">
    <property type="component" value="Chromosome"/>
</dbReference>
<dbReference type="GO" id="GO:0005829">
    <property type="term" value="C:cytosol"/>
    <property type="evidence" value="ECO:0007669"/>
    <property type="project" value="TreeGrafter"/>
</dbReference>
<dbReference type="GO" id="GO:0004014">
    <property type="term" value="F:adenosylmethionine decarboxylase activity"/>
    <property type="evidence" value="ECO:0007669"/>
    <property type="project" value="UniProtKB-UniRule"/>
</dbReference>
<dbReference type="GO" id="GO:0008295">
    <property type="term" value="P:spermidine biosynthetic process"/>
    <property type="evidence" value="ECO:0007669"/>
    <property type="project" value="UniProtKB-UniRule"/>
</dbReference>
<dbReference type="FunFam" id="3.30.360.110:FF:000001">
    <property type="entry name" value="S-adenosylmethionine decarboxylase proenzyme"/>
    <property type="match status" value="1"/>
</dbReference>
<dbReference type="Gene3D" id="3.30.160.750">
    <property type="match status" value="1"/>
</dbReference>
<dbReference type="Gene3D" id="3.30.360.110">
    <property type="entry name" value="S-adenosylmethionine decarboxylase domain"/>
    <property type="match status" value="1"/>
</dbReference>
<dbReference type="HAMAP" id="MF_00464">
    <property type="entry name" value="AdoMetDC_1"/>
    <property type="match status" value="1"/>
</dbReference>
<dbReference type="InterPro" id="IPR042286">
    <property type="entry name" value="AdoMetDC_C"/>
</dbReference>
<dbReference type="InterPro" id="IPR003826">
    <property type="entry name" value="AdoMetDC_fam_prok"/>
</dbReference>
<dbReference type="InterPro" id="IPR042284">
    <property type="entry name" value="AdoMetDC_N"/>
</dbReference>
<dbReference type="InterPro" id="IPR016067">
    <property type="entry name" value="S-AdoMet_deCO2ase_core"/>
</dbReference>
<dbReference type="InterPro" id="IPR017716">
    <property type="entry name" value="S-AdoMet_deCOase_pro-enz"/>
</dbReference>
<dbReference type="NCBIfam" id="TIGR03330">
    <property type="entry name" value="SAM_DCase_Bsu"/>
    <property type="match status" value="1"/>
</dbReference>
<dbReference type="PANTHER" id="PTHR33866">
    <property type="entry name" value="S-ADENOSYLMETHIONINE DECARBOXYLASE PROENZYME"/>
    <property type="match status" value="1"/>
</dbReference>
<dbReference type="PANTHER" id="PTHR33866:SF2">
    <property type="entry name" value="S-ADENOSYLMETHIONINE DECARBOXYLASE PROENZYME"/>
    <property type="match status" value="1"/>
</dbReference>
<dbReference type="Pfam" id="PF02675">
    <property type="entry name" value="AdoMet_dc"/>
    <property type="match status" value="1"/>
</dbReference>
<dbReference type="SUPFAM" id="SSF56276">
    <property type="entry name" value="S-adenosylmethionine decarboxylase"/>
    <property type="match status" value="1"/>
</dbReference>